<feature type="chain" id="PRO_0000329698" description="Polyribonucleotide nucleotidyltransferase">
    <location>
        <begin position="1"/>
        <end position="696"/>
    </location>
</feature>
<feature type="domain" description="KH" evidence="1">
    <location>
        <begin position="553"/>
        <end position="612"/>
    </location>
</feature>
<feature type="domain" description="S1 motif" evidence="1">
    <location>
        <begin position="622"/>
        <end position="690"/>
    </location>
</feature>
<feature type="binding site" evidence="1">
    <location>
        <position position="486"/>
    </location>
    <ligand>
        <name>Mg(2+)</name>
        <dbReference type="ChEBI" id="CHEBI:18420"/>
    </ligand>
</feature>
<feature type="binding site" evidence="1">
    <location>
        <position position="492"/>
    </location>
    <ligand>
        <name>Mg(2+)</name>
        <dbReference type="ChEBI" id="CHEBI:18420"/>
    </ligand>
</feature>
<gene>
    <name evidence="1" type="primary">pnp</name>
    <name type="ordered locus">LBL_2083</name>
</gene>
<proteinExistence type="inferred from homology"/>
<sequence length="696" mass="76172">MTHTISGQYGRDTIVLETGNWAKQAHGAVVYKSGNLVLLATVCAADDAKEGQDFFPLTCEYTEKLYSVGRFPGGYFKREAKPPEHEILISRIIDRPIRPLFPEGYFCEVQLQVQVLSADGDVSVAGHALNAASVALTISDIPFNGPIAGARIGRINGELILNPTTKEIVNSDLDLVVAGTKTHIVMIEGEAKELSNEEMLSALRFAQKHIAEFVTLQEEYAKQIGVVKREVKLKARDVELLAKVKEYAFAKLTAANQTPDKTVRNKEISNVNKDVVEFFKQTVEDADKIKDIKTYLHELEYEIVREQVLNQGVRFDGRRLDEIRPISVEINPLPGPHGSSVFTRGQTQSLGVVTLGTGSDNQRYETLEGQKEKSFMLHYNFPAFSVGEVRRSSGPGRREIGHGNLAERALKLVLPKSEEFPYVIRVVSEILESNGSSSMASVCSGSLALMAAGVPIKGSVAGIAMGLFSDSSGKYAVLSDIAGLEDHFGDMDCKIAGTRKGITAFQMDLKVTGVSFDVLESVFEQAQRGRFHILDIMEKHISKASDSLAGTAPRIIVRNIPKDRIGELIGPGGKNVRGISELTGAELYIEDDGRVTISGSNQESAEKAAKMVDGFFAEVEVGKIYEGKVKRIADFGAFVEILPGKEGLCHISKIDFKRVNSVKDIVKEGDIIRVKVLNVDKTGKIDLSRKDALEEI</sequence>
<evidence type="ECO:0000255" key="1">
    <source>
        <dbReference type="HAMAP-Rule" id="MF_01595"/>
    </source>
</evidence>
<protein>
    <recommendedName>
        <fullName evidence="1">Polyribonucleotide nucleotidyltransferase</fullName>
        <ecNumber evidence="1">2.7.7.8</ecNumber>
    </recommendedName>
    <alternativeName>
        <fullName evidence="1">Polynucleotide phosphorylase</fullName>
        <shortName evidence="1">PNPase</shortName>
    </alternativeName>
</protein>
<name>PNP_LEPBL</name>
<keyword id="KW-0963">Cytoplasm</keyword>
<keyword id="KW-0460">Magnesium</keyword>
<keyword id="KW-0479">Metal-binding</keyword>
<keyword id="KW-0548">Nucleotidyltransferase</keyword>
<keyword id="KW-0694">RNA-binding</keyword>
<keyword id="KW-0808">Transferase</keyword>
<dbReference type="EC" id="2.7.7.8" evidence="1"/>
<dbReference type="EMBL" id="CP000348">
    <property type="protein sequence ID" value="ABJ79496.1"/>
    <property type="molecule type" value="Genomic_DNA"/>
</dbReference>
<dbReference type="RefSeq" id="WP_011670551.1">
    <property type="nucleotide sequence ID" value="NC_008508.1"/>
</dbReference>
<dbReference type="SMR" id="Q04ZJ9"/>
<dbReference type="KEGG" id="lbl:LBL_2083"/>
<dbReference type="HOGENOM" id="CLU_004217_2_2_12"/>
<dbReference type="GO" id="GO:0005829">
    <property type="term" value="C:cytosol"/>
    <property type="evidence" value="ECO:0007669"/>
    <property type="project" value="TreeGrafter"/>
</dbReference>
<dbReference type="GO" id="GO:0000175">
    <property type="term" value="F:3'-5'-RNA exonuclease activity"/>
    <property type="evidence" value="ECO:0007669"/>
    <property type="project" value="TreeGrafter"/>
</dbReference>
<dbReference type="GO" id="GO:0000287">
    <property type="term" value="F:magnesium ion binding"/>
    <property type="evidence" value="ECO:0007669"/>
    <property type="project" value="UniProtKB-UniRule"/>
</dbReference>
<dbReference type="GO" id="GO:0004654">
    <property type="term" value="F:polyribonucleotide nucleotidyltransferase activity"/>
    <property type="evidence" value="ECO:0007669"/>
    <property type="project" value="UniProtKB-UniRule"/>
</dbReference>
<dbReference type="GO" id="GO:0003723">
    <property type="term" value="F:RNA binding"/>
    <property type="evidence" value="ECO:0007669"/>
    <property type="project" value="UniProtKB-UniRule"/>
</dbReference>
<dbReference type="GO" id="GO:0006402">
    <property type="term" value="P:mRNA catabolic process"/>
    <property type="evidence" value="ECO:0007669"/>
    <property type="project" value="UniProtKB-UniRule"/>
</dbReference>
<dbReference type="GO" id="GO:0006396">
    <property type="term" value="P:RNA processing"/>
    <property type="evidence" value="ECO:0007669"/>
    <property type="project" value="InterPro"/>
</dbReference>
<dbReference type="CDD" id="cd02393">
    <property type="entry name" value="KH-I_PNPase"/>
    <property type="match status" value="1"/>
</dbReference>
<dbReference type="CDD" id="cd11363">
    <property type="entry name" value="RNase_PH_PNPase_1"/>
    <property type="match status" value="1"/>
</dbReference>
<dbReference type="CDD" id="cd11364">
    <property type="entry name" value="RNase_PH_PNPase_2"/>
    <property type="match status" value="1"/>
</dbReference>
<dbReference type="CDD" id="cd04472">
    <property type="entry name" value="S1_PNPase"/>
    <property type="match status" value="1"/>
</dbReference>
<dbReference type="FunFam" id="2.40.50.140:FF:000023">
    <property type="entry name" value="Polyribonucleotide nucleotidyltransferase"/>
    <property type="match status" value="1"/>
</dbReference>
<dbReference type="FunFam" id="3.30.1370.10:FF:000001">
    <property type="entry name" value="Polyribonucleotide nucleotidyltransferase"/>
    <property type="match status" value="1"/>
</dbReference>
<dbReference type="FunFam" id="3.30.230.70:FF:000001">
    <property type="entry name" value="Polyribonucleotide nucleotidyltransferase"/>
    <property type="match status" value="1"/>
</dbReference>
<dbReference type="FunFam" id="3.30.230.70:FF:000013">
    <property type="entry name" value="Polyribonucleotide nucleotidyltransferase"/>
    <property type="match status" value="1"/>
</dbReference>
<dbReference type="Gene3D" id="3.30.230.70">
    <property type="entry name" value="GHMP Kinase, N-terminal domain"/>
    <property type="match status" value="2"/>
</dbReference>
<dbReference type="Gene3D" id="3.30.1370.10">
    <property type="entry name" value="K Homology domain, type 1"/>
    <property type="match status" value="1"/>
</dbReference>
<dbReference type="Gene3D" id="2.40.50.140">
    <property type="entry name" value="Nucleic acid-binding proteins"/>
    <property type="match status" value="1"/>
</dbReference>
<dbReference type="HAMAP" id="MF_01595">
    <property type="entry name" value="PNPase"/>
    <property type="match status" value="1"/>
</dbReference>
<dbReference type="InterPro" id="IPR001247">
    <property type="entry name" value="ExoRNase_PH_dom1"/>
</dbReference>
<dbReference type="InterPro" id="IPR015847">
    <property type="entry name" value="ExoRNase_PH_dom2"/>
</dbReference>
<dbReference type="InterPro" id="IPR036345">
    <property type="entry name" value="ExoRNase_PH_dom2_sf"/>
</dbReference>
<dbReference type="InterPro" id="IPR004087">
    <property type="entry name" value="KH_dom"/>
</dbReference>
<dbReference type="InterPro" id="IPR004088">
    <property type="entry name" value="KH_dom_type_1"/>
</dbReference>
<dbReference type="InterPro" id="IPR036612">
    <property type="entry name" value="KH_dom_type_1_sf"/>
</dbReference>
<dbReference type="InterPro" id="IPR012340">
    <property type="entry name" value="NA-bd_OB-fold"/>
</dbReference>
<dbReference type="InterPro" id="IPR012162">
    <property type="entry name" value="PNPase"/>
</dbReference>
<dbReference type="InterPro" id="IPR027408">
    <property type="entry name" value="PNPase/RNase_PH_dom_sf"/>
</dbReference>
<dbReference type="InterPro" id="IPR015848">
    <property type="entry name" value="PNPase_PH_RNA-bd_bac/org-type"/>
</dbReference>
<dbReference type="InterPro" id="IPR036456">
    <property type="entry name" value="PNPase_PH_RNA-bd_sf"/>
</dbReference>
<dbReference type="InterPro" id="IPR020568">
    <property type="entry name" value="Ribosomal_Su5_D2-typ_SF"/>
</dbReference>
<dbReference type="InterPro" id="IPR003029">
    <property type="entry name" value="S1_domain"/>
</dbReference>
<dbReference type="NCBIfam" id="TIGR03591">
    <property type="entry name" value="polynuc_phos"/>
    <property type="match status" value="1"/>
</dbReference>
<dbReference type="NCBIfam" id="NF008805">
    <property type="entry name" value="PRK11824.1"/>
    <property type="match status" value="1"/>
</dbReference>
<dbReference type="PANTHER" id="PTHR11252">
    <property type="entry name" value="POLYRIBONUCLEOTIDE NUCLEOTIDYLTRANSFERASE"/>
    <property type="match status" value="1"/>
</dbReference>
<dbReference type="PANTHER" id="PTHR11252:SF0">
    <property type="entry name" value="POLYRIBONUCLEOTIDE NUCLEOTIDYLTRANSFERASE 1, MITOCHONDRIAL"/>
    <property type="match status" value="1"/>
</dbReference>
<dbReference type="Pfam" id="PF00013">
    <property type="entry name" value="KH_1"/>
    <property type="match status" value="1"/>
</dbReference>
<dbReference type="Pfam" id="PF03726">
    <property type="entry name" value="PNPase"/>
    <property type="match status" value="1"/>
</dbReference>
<dbReference type="Pfam" id="PF01138">
    <property type="entry name" value="RNase_PH"/>
    <property type="match status" value="2"/>
</dbReference>
<dbReference type="Pfam" id="PF03725">
    <property type="entry name" value="RNase_PH_C"/>
    <property type="match status" value="1"/>
</dbReference>
<dbReference type="Pfam" id="PF00575">
    <property type="entry name" value="S1"/>
    <property type="match status" value="1"/>
</dbReference>
<dbReference type="PIRSF" id="PIRSF005499">
    <property type="entry name" value="PNPase"/>
    <property type="match status" value="1"/>
</dbReference>
<dbReference type="SMART" id="SM00322">
    <property type="entry name" value="KH"/>
    <property type="match status" value="1"/>
</dbReference>
<dbReference type="SMART" id="SM00316">
    <property type="entry name" value="S1"/>
    <property type="match status" value="1"/>
</dbReference>
<dbReference type="SUPFAM" id="SSF54791">
    <property type="entry name" value="Eukaryotic type KH-domain (KH-domain type I)"/>
    <property type="match status" value="1"/>
</dbReference>
<dbReference type="SUPFAM" id="SSF50249">
    <property type="entry name" value="Nucleic acid-binding proteins"/>
    <property type="match status" value="1"/>
</dbReference>
<dbReference type="SUPFAM" id="SSF46915">
    <property type="entry name" value="Polynucleotide phosphorylase/guanosine pentaphosphate synthase (PNPase/GPSI), domain 3"/>
    <property type="match status" value="1"/>
</dbReference>
<dbReference type="SUPFAM" id="SSF55666">
    <property type="entry name" value="Ribonuclease PH domain 2-like"/>
    <property type="match status" value="2"/>
</dbReference>
<dbReference type="SUPFAM" id="SSF54211">
    <property type="entry name" value="Ribosomal protein S5 domain 2-like"/>
    <property type="match status" value="2"/>
</dbReference>
<dbReference type="PROSITE" id="PS50084">
    <property type="entry name" value="KH_TYPE_1"/>
    <property type="match status" value="1"/>
</dbReference>
<dbReference type="PROSITE" id="PS50126">
    <property type="entry name" value="S1"/>
    <property type="match status" value="1"/>
</dbReference>
<comment type="function">
    <text evidence="1">Involved in mRNA degradation. Catalyzes the phosphorolysis of single-stranded polyribonucleotides processively in the 3'- to 5'-direction.</text>
</comment>
<comment type="catalytic activity">
    <reaction evidence="1">
        <text>RNA(n+1) + phosphate = RNA(n) + a ribonucleoside 5'-diphosphate</text>
        <dbReference type="Rhea" id="RHEA:22096"/>
        <dbReference type="Rhea" id="RHEA-COMP:14527"/>
        <dbReference type="Rhea" id="RHEA-COMP:17342"/>
        <dbReference type="ChEBI" id="CHEBI:43474"/>
        <dbReference type="ChEBI" id="CHEBI:57930"/>
        <dbReference type="ChEBI" id="CHEBI:140395"/>
        <dbReference type="EC" id="2.7.7.8"/>
    </reaction>
</comment>
<comment type="cofactor">
    <cofactor evidence="1">
        <name>Mg(2+)</name>
        <dbReference type="ChEBI" id="CHEBI:18420"/>
    </cofactor>
</comment>
<comment type="subcellular location">
    <subcellularLocation>
        <location evidence="1">Cytoplasm</location>
    </subcellularLocation>
</comment>
<comment type="similarity">
    <text evidence="1">Belongs to the polyribonucleotide nucleotidyltransferase family.</text>
</comment>
<accession>Q04ZJ9</accession>
<reference key="1">
    <citation type="journal article" date="2006" name="Proc. Natl. Acad. Sci. U.S.A.">
        <title>Genome reduction in Leptospira borgpetersenii reflects limited transmission potential.</title>
        <authorList>
            <person name="Bulach D.M."/>
            <person name="Zuerner R.L."/>
            <person name="Wilson P."/>
            <person name="Seemann T."/>
            <person name="McGrath A."/>
            <person name="Cullen P.A."/>
            <person name="Davis J."/>
            <person name="Johnson M."/>
            <person name="Kuczek E."/>
            <person name="Alt D.P."/>
            <person name="Peterson-Burch B."/>
            <person name="Coppel R.L."/>
            <person name="Rood J.I."/>
            <person name="Davies J.K."/>
            <person name="Adler B."/>
        </authorList>
    </citation>
    <scope>NUCLEOTIDE SEQUENCE [LARGE SCALE GENOMIC DNA]</scope>
    <source>
        <strain>L550</strain>
    </source>
</reference>
<organism>
    <name type="scientific">Leptospira borgpetersenii serovar Hardjo-bovis (strain L550)</name>
    <dbReference type="NCBI Taxonomy" id="355276"/>
    <lineage>
        <taxon>Bacteria</taxon>
        <taxon>Pseudomonadati</taxon>
        <taxon>Spirochaetota</taxon>
        <taxon>Spirochaetia</taxon>
        <taxon>Leptospirales</taxon>
        <taxon>Leptospiraceae</taxon>
        <taxon>Leptospira</taxon>
    </lineage>
</organism>